<name>SYS_STRPB</name>
<feature type="chain" id="PRO_1000019837" description="Serine--tRNA ligase">
    <location>
        <begin position="1"/>
        <end position="425"/>
    </location>
</feature>
<feature type="binding site" evidence="1">
    <location>
        <begin position="230"/>
        <end position="232"/>
    </location>
    <ligand>
        <name>L-serine</name>
        <dbReference type="ChEBI" id="CHEBI:33384"/>
    </ligand>
</feature>
<feature type="binding site" evidence="1">
    <location>
        <begin position="261"/>
        <end position="263"/>
    </location>
    <ligand>
        <name>ATP</name>
        <dbReference type="ChEBI" id="CHEBI:30616"/>
    </ligand>
</feature>
<feature type="binding site" evidence="1">
    <location>
        <position position="284"/>
    </location>
    <ligand>
        <name>L-serine</name>
        <dbReference type="ChEBI" id="CHEBI:33384"/>
    </ligand>
</feature>
<feature type="binding site" evidence="1">
    <location>
        <begin position="348"/>
        <end position="351"/>
    </location>
    <ligand>
        <name>ATP</name>
        <dbReference type="ChEBI" id="CHEBI:30616"/>
    </ligand>
</feature>
<feature type="binding site" evidence="1">
    <location>
        <position position="384"/>
    </location>
    <ligand>
        <name>L-serine</name>
        <dbReference type="ChEBI" id="CHEBI:33384"/>
    </ligand>
</feature>
<accession>Q1JA99</accession>
<sequence length="425" mass="48210">MLDLKRIRTDFDTVAAKLKNRGVSEDTLTHLKELDEKRRTLLVQSEELKAERNIASAAIAQAKRQKEDATQQIADMQKVSADIKTIDNQLVAIDQQVTDIITVLPNTPHDSVPVGADEEDNVEIRRWGTPRDFNFEVKAHWDLGEDLDILDWERGAKVTGARFLFYKNLGARLERALYNFMLDEHIKEGYQEIITPYMVNHDSMFGTGQYPKFKEDTFELADTNFVLIPTAEVPLTNYYRGEILDGKELPIYFTAMSPSFRSEAGSAGRDTRGLIRLHQFHKVEMVKFAKPEESYQELEKMTANAENILQKLGLPYRVISLCTGDMGFSAAKTYDLEVWIPAQNTYREISSCSNTEDFQARRAQIRYRDEADGKVKLLHTLNGSGLAVGRTVAAILENYQNEDGSVTIPEVLRPYMGGETVISPK</sequence>
<gene>
    <name evidence="1" type="primary">serS</name>
    <name type="ordered locus">MGAS2096_Spy1510</name>
</gene>
<protein>
    <recommendedName>
        <fullName evidence="1">Serine--tRNA ligase</fullName>
        <ecNumber evidence="1">6.1.1.11</ecNumber>
    </recommendedName>
    <alternativeName>
        <fullName evidence="1">Seryl-tRNA synthetase</fullName>
        <shortName evidence="1">SerRS</shortName>
    </alternativeName>
    <alternativeName>
        <fullName evidence="1">Seryl-tRNA(Ser/Sec) synthetase</fullName>
    </alternativeName>
</protein>
<proteinExistence type="inferred from homology"/>
<dbReference type="EC" id="6.1.1.11" evidence="1"/>
<dbReference type="EMBL" id="CP000261">
    <property type="protein sequence ID" value="ABF36562.1"/>
    <property type="molecule type" value="Genomic_DNA"/>
</dbReference>
<dbReference type="SMR" id="Q1JA99"/>
<dbReference type="KEGG" id="spj:MGAS2096_Spy1510"/>
<dbReference type="HOGENOM" id="CLU_023797_1_1_9"/>
<dbReference type="UniPathway" id="UPA00906">
    <property type="reaction ID" value="UER00895"/>
</dbReference>
<dbReference type="GO" id="GO:0005737">
    <property type="term" value="C:cytoplasm"/>
    <property type="evidence" value="ECO:0007669"/>
    <property type="project" value="UniProtKB-SubCell"/>
</dbReference>
<dbReference type="GO" id="GO:0005524">
    <property type="term" value="F:ATP binding"/>
    <property type="evidence" value="ECO:0007669"/>
    <property type="project" value="UniProtKB-UniRule"/>
</dbReference>
<dbReference type="GO" id="GO:0140096">
    <property type="term" value="F:catalytic activity, acting on a protein"/>
    <property type="evidence" value="ECO:0007669"/>
    <property type="project" value="UniProtKB-ARBA"/>
</dbReference>
<dbReference type="GO" id="GO:0004828">
    <property type="term" value="F:serine-tRNA ligase activity"/>
    <property type="evidence" value="ECO:0007669"/>
    <property type="project" value="UniProtKB-UniRule"/>
</dbReference>
<dbReference type="GO" id="GO:0016740">
    <property type="term" value="F:transferase activity"/>
    <property type="evidence" value="ECO:0007669"/>
    <property type="project" value="UniProtKB-ARBA"/>
</dbReference>
<dbReference type="GO" id="GO:0016260">
    <property type="term" value="P:selenocysteine biosynthetic process"/>
    <property type="evidence" value="ECO:0007669"/>
    <property type="project" value="UniProtKB-UniRule"/>
</dbReference>
<dbReference type="GO" id="GO:0006434">
    <property type="term" value="P:seryl-tRNA aminoacylation"/>
    <property type="evidence" value="ECO:0007669"/>
    <property type="project" value="UniProtKB-UniRule"/>
</dbReference>
<dbReference type="CDD" id="cd00770">
    <property type="entry name" value="SerRS_core"/>
    <property type="match status" value="1"/>
</dbReference>
<dbReference type="Gene3D" id="3.30.930.10">
    <property type="entry name" value="Bira Bifunctional Protein, Domain 2"/>
    <property type="match status" value="1"/>
</dbReference>
<dbReference type="Gene3D" id="1.10.287.40">
    <property type="entry name" value="Serine-tRNA synthetase, tRNA binding domain"/>
    <property type="match status" value="1"/>
</dbReference>
<dbReference type="HAMAP" id="MF_00176">
    <property type="entry name" value="Ser_tRNA_synth_type1"/>
    <property type="match status" value="1"/>
</dbReference>
<dbReference type="InterPro" id="IPR002314">
    <property type="entry name" value="aa-tRNA-synt_IIb"/>
</dbReference>
<dbReference type="InterPro" id="IPR006195">
    <property type="entry name" value="aa-tRNA-synth_II"/>
</dbReference>
<dbReference type="InterPro" id="IPR045864">
    <property type="entry name" value="aa-tRNA-synth_II/BPL/LPL"/>
</dbReference>
<dbReference type="InterPro" id="IPR002317">
    <property type="entry name" value="Ser-tRNA-ligase_type_1"/>
</dbReference>
<dbReference type="InterPro" id="IPR015866">
    <property type="entry name" value="Ser-tRNA-synth_1_N"/>
</dbReference>
<dbReference type="InterPro" id="IPR042103">
    <property type="entry name" value="SerRS_1_N_sf"/>
</dbReference>
<dbReference type="InterPro" id="IPR033729">
    <property type="entry name" value="SerRS_core"/>
</dbReference>
<dbReference type="InterPro" id="IPR010978">
    <property type="entry name" value="tRNA-bd_arm"/>
</dbReference>
<dbReference type="NCBIfam" id="TIGR00414">
    <property type="entry name" value="serS"/>
    <property type="match status" value="1"/>
</dbReference>
<dbReference type="PANTHER" id="PTHR43697:SF1">
    <property type="entry name" value="SERINE--TRNA LIGASE"/>
    <property type="match status" value="1"/>
</dbReference>
<dbReference type="PANTHER" id="PTHR43697">
    <property type="entry name" value="SERYL-TRNA SYNTHETASE"/>
    <property type="match status" value="1"/>
</dbReference>
<dbReference type="Pfam" id="PF02403">
    <property type="entry name" value="Seryl_tRNA_N"/>
    <property type="match status" value="1"/>
</dbReference>
<dbReference type="Pfam" id="PF00587">
    <property type="entry name" value="tRNA-synt_2b"/>
    <property type="match status" value="1"/>
</dbReference>
<dbReference type="PIRSF" id="PIRSF001529">
    <property type="entry name" value="Ser-tRNA-synth_IIa"/>
    <property type="match status" value="1"/>
</dbReference>
<dbReference type="PRINTS" id="PR00981">
    <property type="entry name" value="TRNASYNTHSER"/>
</dbReference>
<dbReference type="SUPFAM" id="SSF55681">
    <property type="entry name" value="Class II aaRS and biotin synthetases"/>
    <property type="match status" value="1"/>
</dbReference>
<dbReference type="SUPFAM" id="SSF46589">
    <property type="entry name" value="tRNA-binding arm"/>
    <property type="match status" value="1"/>
</dbReference>
<dbReference type="PROSITE" id="PS50862">
    <property type="entry name" value="AA_TRNA_LIGASE_II"/>
    <property type="match status" value="1"/>
</dbReference>
<comment type="function">
    <text evidence="1">Catalyzes the attachment of serine to tRNA(Ser). Is also able to aminoacylate tRNA(Sec) with serine, to form the misacylated tRNA L-seryl-tRNA(Sec), which will be further converted into selenocysteinyl-tRNA(Sec).</text>
</comment>
<comment type="catalytic activity">
    <reaction evidence="1">
        <text>tRNA(Ser) + L-serine + ATP = L-seryl-tRNA(Ser) + AMP + diphosphate + H(+)</text>
        <dbReference type="Rhea" id="RHEA:12292"/>
        <dbReference type="Rhea" id="RHEA-COMP:9669"/>
        <dbReference type="Rhea" id="RHEA-COMP:9703"/>
        <dbReference type="ChEBI" id="CHEBI:15378"/>
        <dbReference type="ChEBI" id="CHEBI:30616"/>
        <dbReference type="ChEBI" id="CHEBI:33019"/>
        <dbReference type="ChEBI" id="CHEBI:33384"/>
        <dbReference type="ChEBI" id="CHEBI:78442"/>
        <dbReference type="ChEBI" id="CHEBI:78533"/>
        <dbReference type="ChEBI" id="CHEBI:456215"/>
        <dbReference type="EC" id="6.1.1.11"/>
    </reaction>
</comment>
<comment type="catalytic activity">
    <reaction evidence="1">
        <text>tRNA(Sec) + L-serine + ATP = L-seryl-tRNA(Sec) + AMP + diphosphate + H(+)</text>
        <dbReference type="Rhea" id="RHEA:42580"/>
        <dbReference type="Rhea" id="RHEA-COMP:9742"/>
        <dbReference type="Rhea" id="RHEA-COMP:10128"/>
        <dbReference type="ChEBI" id="CHEBI:15378"/>
        <dbReference type="ChEBI" id="CHEBI:30616"/>
        <dbReference type="ChEBI" id="CHEBI:33019"/>
        <dbReference type="ChEBI" id="CHEBI:33384"/>
        <dbReference type="ChEBI" id="CHEBI:78442"/>
        <dbReference type="ChEBI" id="CHEBI:78533"/>
        <dbReference type="ChEBI" id="CHEBI:456215"/>
        <dbReference type="EC" id="6.1.1.11"/>
    </reaction>
</comment>
<comment type="pathway">
    <text evidence="1">Aminoacyl-tRNA biosynthesis; selenocysteinyl-tRNA(Sec) biosynthesis; L-seryl-tRNA(Sec) from L-serine and tRNA(Sec): step 1/1.</text>
</comment>
<comment type="subunit">
    <text evidence="1">Homodimer. The tRNA molecule binds across the dimer.</text>
</comment>
<comment type="subcellular location">
    <subcellularLocation>
        <location evidence="1">Cytoplasm</location>
    </subcellularLocation>
</comment>
<comment type="domain">
    <text evidence="1">Consists of two distinct domains, a catalytic core and a N-terminal extension that is involved in tRNA binding.</text>
</comment>
<comment type="similarity">
    <text evidence="1">Belongs to the class-II aminoacyl-tRNA synthetase family. Type-1 seryl-tRNA synthetase subfamily.</text>
</comment>
<keyword id="KW-0030">Aminoacyl-tRNA synthetase</keyword>
<keyword id="KW-0067">ATP-binding</keyword>
<keyword id="KW-0963">Cytoplasm</keyword>
<keyword id="KW-0436">Ligase</keyword>
<keyword id="KW-0547">Nucleotide-binding</keyword>
<keyword id="KW-0648">Protein biosynthesis</keyword>
<reference key="1">
    <citation type="journal article" date="2006" name="Proc. Natl. Acad. Sci. U.S.A.">
        <title>Molecular genetic anatomy of inter- and intraserotype variation in the human bacterial pathogen group A Streptococcus.</title>
        <authorList>
            <person name="Beres S.B."/>
            <person name="Richter E.W."/>
            <person name="Nagiec M.J."/>
            <person name="Sumby P."/>
            <person name="Porcella S.F."/>
            <person name="DeLeo F.R."/>
            <person name="Musser J.M."/>
        </authorList>
    </citation>
    <scope>NUCLEOTIDE SEQUENCE [LARGE SCALE GENOMIC DNA]</scope>
    <source>
        <strain>MGAS2096</strain>
    </source>
</reference>
<evidence type="ECO:0000255" key="1">
    <source>
        <dbReference type="HAMAP-Rule" id="MF_00176"/>
    </source>
</evidence>
<organism>
    <name type="scientific">Streptococcus pyogenes serotype M12 (strain MGAS2096)</name>
    <dbReference type="NCBI Taxonomy" id="370553"/>
    <lineage>
        <taxon>Bacteria</taxon>
        <taxon>Bacillati</taxon>
        <taxon>Bacillota</taxon>
        <taxon>Bacilli</taxon>
        <taxon>Lactobacillales</taxon>
        <taxon>Streptococcaceae</taxon>
        <taxon>Streptococcus</taxon>
    </lineage>
</organism>